<protein>
    <recommendedName>
        <fullName evidence="1">Small ribosomal subunit protein uS10</fullName>
    </recommendedName>
    <alternativeName>
        <fullName evidence="2">30S ribosomal protein S10</fullName>
    </alternativeName>
</protein>
<proteinExistence type="inferred from homology"/>
<feature type="chain" id="PRO_1000015103" description="Small ribosomal subunit protein uS10">
    <location>
        <begin position="1"/>
        <end position="102"/>
    </location>
</feature>
<accession>A5USJ0</accession>
<organism>
    <name type="scientific">Roseiflexus sp. (strain RS-1)</name>
    <dbReference type="NCBI Taxonomy" id="357808"/>
    <lineage>
        <taxon>Bacteria</taxon>
        <taxon>Bacillati</taxon>
        <taxon>Chloroflexota</taxon>
        <taxon>Chloroflexia</taxon>
        <taxon>Chloroflexales</taxon>
        <taxon>Roseiflexineae</taxon>
        <taxon>Roseiflexaceae</taxon>
        <taxon>Roseiflexus</taxon>
    </lineage>
</organism>
<comment type="function">
    <text evidence="1">Involved in the binding of tRNA to the ribosomes.</text>
</comment>
<comment type="subunit">
    <text evidence="1">Part of the 30S ribosomal subunit.</text>
</comment>
<comment type="similarity">
    <text evidence="1">Belongs to the universal ribosomal protein uS10 family.</text>
</comment>
<gene>
    <name evidence="1" type="primary">rpsJ</name>
    <name type="ordered locus">RoseRS_1186</name>
</gene>
<sequence length="102" mass="11533">MAKQKVRIRLKAYDHKILDQSARQIVEAAERTGALVAGPVPLPTKIEKHSVIRSPFIDKDSQEQFEIRTHKRLIDVLDPSQQTINALMKLNLPAGVDIEIKL</sequence>
<keyword id="KW-0687">Ribonucleoprotein</keyword>
<keyword id="KW-0689">Ribosomal protein</keyword>
<name>RS10_ROSS1</name>
<dbReference type="EMBL" id="CP000686">
    <property type="protein sequence ID" value="ABQ89593.1"/>
    <property type="molecule type" value="Genomic_DNA"/>
</dbReference>
<dbReference type="RefSeq" id="WP_011955946.1">
    <property type="nucleotide sequence ID" value="NC_009523.1"/>
</dbReference>
<dbReference type="SMR" id="A5USJ0"/>
<dbReference type="STRING" id="357808.RoseRS_1186"/>
<dbReference type="KEGG" id="rrs:RoseRS_1186"/>
<dbReference type="eggNOG" id="COG0051">
    <property type="taxonomic scope" value="Bacteria"/>
</dbReference>
<dbReference type="HOGENOM" id="CLU_122625_1_3_0"/>
<dbReference type="OrthoDB" id="9804464at2"/>
<dbReference type="Proteomes" id="UP000006554">
    <property type="component" value="Chromosome"/>
</dbReference>
<dbReference type="GO" id="GO:1990904">
    <property type="term" value="C:ribonucleoprotein complex"/>
    <property type="evidence" value="ECO:0007669"/>
    <property type="project" value="UniProtKB-KW"/>
</dbReference>
<dbReference type="GO" id="GO:0005840">
    <property type="term" value="C:ribosome"/>
    <property type="evidence" value="ECO:0007669"/>
    <property type="project" value="UniProtKB-KW"/>
</dbReference>
<dbReference type="GO" id="GO:0003735">
    <property type="term" value="F:structural constituent of ribosome"/>
    <property type="evidence" value="ECO:0007669"/>
    <property type="project" value="InterPro"/>
</dbReference>
<dbReference type="GO" id="GO:0000049">
    <property type="term" value="F:tRNA binding"/>
    <property type="evidence" value="ECO:0007669"/>
    <property type="project" value="UniProtKB-UniRule"/>
</dbReference>
<dbReference type="GO" id="GO:0006412">
    <property type="term" value="P:translation"/>
    <property type="evidence" value="ECO:0007669"/>
    <property type="project" value="UniProtKB-UniRule"/>
</dbReference>
<dbReference type="FunFam" id="3.30.70.600:FF:000001">
    <property type="entry name" value="30S ribosomal protein S10"/>
    <property type="match status" value="1"/>
</dbReference>
<dbReference type="Gene3D" id="3.30.70.600">
    <property type="entry name" value="Ribosomal protein S10 domain"/>
    <property type="match status" value="1"/>
</dbReference>
<dbReference type="HAMAP" id="MF_00508">
    <property type="entry name" value="Ribosomal_uS10"/>
    <property type="match status" value="1"/>
</dbReference>
<dbReference type="InterPro" id="IPR001848">
    <property type="entry name" value="Ribosomal_uS10"/>
</dbReference>
<dbReference type="InterPro" id="IPR018268">
    <property type="entry name" value="Ribosomal_uS10_CS"/>
</dbReference>
<dbReference type="InterPro" id="IPR027486">
    <property type="entry name" value="Ribosomal_uS10_dom"/>
</dbReference>
<dbReference type="InterPro" id="IPR036838">
    <property type="entry name" value="Ribosomal_uS10_dom_sf"/>
</dbReference>
<dbReference type="NCBIfam" id="NF001861">
    <property type="entry name" value="PRK00596.1"/>
    <property type="match status" value="1"/>
</dbReference>
<dbReference type="NCBIfam" id="TIGR01049">
    <property type="entry name" value="rpsJ_bact"/>
    <property type="match status" value="1"/>
</dbReference>
<dbReference type="PANTHER" id="PTHR11700">
    <property type="entry name" value="30S RIBOSOMAL PROTEIN S10 FAMILY MEMBER"/>
    <property type="match status" value="1"/>
</dbReference>
<dbReference type="Pfam" id="PF00338">
    <property type="entry name" value="Ribosomal_S10"/>
    <property type="match status" value="1"/>
</dbReference>
<dbReference type="PRINTS" id="PR00971">
    <property type="entry name" value="RIBOSOMALS10"/>
</dbReference>
<dbReference type="SMART" id="SM01403">
    <property type="entry name" value="Ribosomal_S10"/>
    <property type="match status" value="1"/>
</dbReference>
<dbReference type="SUPFAM" id="SSF54999">
    <property type="entry name" value="Ribosomal protein S10"/>
    <property type="match status" value="1"/>
</dbReference>
<dbReference type="PROSITE" id="PS00361">
    <property type="entry name" value="RIBOSOMAL_S10"/>
    <property type="match status" value="1"/>
</dbReference>
<reference key="1">
    <citation type="submission" date="2007-04" db="EMBL/GenBank/DDBJ databases">
        <title>Complete sequence of Roseiflexus sp. RS-1.</title>
        <authorList>
            <consortium name="US DOE Joint Genome Institute"/>
            <person name="Copeland A."/>
            <person name="Lucas S."/>
            <person name="Lapidus A."/>
            <person name="Barry K."/>
            <person name="Detter J.C."/>
            <person name="Glavina del Rio T."/>
            <person name="Hammon N."/>
            <person name="Israni S."/>
            <person name="Dalin E."/>
            <person name="Tice H."/>
            <person name="Pitluck S."/>
            <person name="Chertkov O."/>
            <person name="Brettin T."/>
            <person name="Bruce D."/>
            <person name="Han C."/>
            <person name="Schmutz J."/>
            <person name="Larimer F."/>
            <person name="Land M."/>
            <person name="Hauser L."/>
            <person name="Kyrpides N."/>
            <person name="Mikhailova N."/>
            <person name="Bryant D.A."/>
            <person name="Richardson P."/>
        </authorList>
    </citation>
    <scope>NUCLEOTIDE SEQUENCE [LARGE SCALE GENOMIC DNA]</scope>
    <source>
        <strain>RS-1</strain>
    </source>
</reference>
<evidence type="ECO:0000255" key="1">
    <source>
        <dbReference type="HAMAP-Rule" id="MF_00508"/>
    </source>
</evidence>
<evidence type="ECO:0000305" key="2"/>